<accession>Q8SVY9</accession>
<gene>
    <name type="ordered locus">ECU03_1610</name>
</gene>
<dbReference type="EMBL" id="AL590443">
    <property type="protein sequence ID" value="CAD26304.1"/>
    <property type="molecule type" value="Genomic_DNA"/>
</dbReference>
<dbReference type="RefSeq" id="NP_597669.1">
    <property type="nucleotide sequence ID" value="NM_001041033.1"/>
</dbReference>
<dbReference type="SMR" id="Q8SVY9"/>
<dbReference type="GeneID" id="858831"/>
<dbReference type="KEGG" id="ecu:ECU03_1610"/>
<dbReference type="VEuPathDB" id="MicrosporidiaDB:ECU03_1610"/>
<dbReference type="HOGENOM" id="CLU_1602698_0_0_1"/>
<dbReference type="InParanoid" id="Q8SVY9"/>
<dbReference type="OMA" id="EGCKAND"/>
<dbReference type="OrthoDB" id="2193576at2759"/>
<dbReference type="Proteomes" id="UP000000819">
    <property type="component" value="Chromosome III"/>
</dbReference>
<dbReference type="Gene3D" id="6.10.140.1430">
    <property type="match status" value="1"/>
</dbReference>
<dbReference type="Gene3D" id="1.10.287.700">
    <property type="entry name" value="Helix hairpin bin"/>
    <property type="match status" value="1"/>
</dbReference>
<dbReference type="PANTHER" id="PTHR47372">
    <property type="entry name" value="DAUER UP-REGULATED-RELATED"/>
    <property type="match status" value="1"/>
</dbReference>
<dbReference type="PANTHER" id="PTHR47372:SF5">
    <property type="entry name" value="LATE EMBRYOGENESIS ABUNDANT PROTEIN (LEA) FAMILY PROTEIN"/>
    <property type="match status" value="1"/>
</dbReference>
<reference key="1">
    <citation type="journal article" date="2001" name="Nature">
        <title>Genome sequence and gene compaction of the eukaryote parasite Encephalitozoon cuniculi.</title>
        <authorList>
            <person name="Katinka M.D."/>
            <person name="Duprat S."/>
            <person name="Cornillot E."/>
            <person name="Metenier G."/>
            <person name="Thomarat F."/>
            <person name="Prensier G."/>
            <person name="Barbe V."/>
            <person name="Peyretaillade E."/>
            <person name="Brottier P."/>
            <person name="Wincker P."/>
            <person name="Delbac F."/>
            <person name="El Alaoui H."/>
            <person name="Peyret P."/>
            <person name="Saurin W."/>
            <person name="Gouy M."/>
            <person name="Weissenbach J."/>
            <person name="Vivares C.P."/>
        </authorList>
    </citation>
    <scope>NUCLEOTIDE SEQUENCE [LARGE SCALE GENOMIC DNA]</scope>
    <source>
        <strain>GB-M1</strain>
    </source>
</reference>
<reference key="2">
    <citation type="journal article" date="2006" name="Proteomics">
        <title>Proteomic analysis of the eukaryotic parasite Encephalitozoon cuniculi (microsporidia): a reference map for proteins expressed in late sporogonial stages.</title>
        <authorList>
            <person name="Brosson D."/>
            <person name="Kuhn L."/>
            <person name="Delbac F."/>
            <person name="Garin J."/>
            <person name="Vivares C.P."/>
            <person name="Texier C."/>
        </authorList>
    </citation>
    <scope>IDENTIFICATION BY MASS SPECTROMETRY [LARGE SCALE ANALYSIS]</scope>
    <scope>DEVELOPMENTAL STAGE</scope>
    <scope>SUBCELLULAR LOCATION</scope>
</reference>
<name>Y3G1_ENCCU</name>
<sequence length="166" mass="18030">MAEVSKKRCEHNSDSQCEGCKANDKACEARDKTKETAGSAKDKTKETAGSAKDKTKETAESAKDKTKETAGSAKDKTKETAESAKDKTKETAGSAKDKTKETAESAKDKTKETAGNVRDNVENKDKNEVYENIKEGGSKAWNKTKEVANSMKDGIKDLANKDEQKK</sequence>
<organism>
    <name type="scientific">Encephalitozoon cuniculi (strain GB-M1)</name>
    <name type="common">Microsporidian parasite</name>
    <dbReference type="NCBI Taxonomy" id="284813"/>
    <lineage>
        <taxon>Eukaryota</taxon>
        <taxon>Fungi</taxon>
        <taxon>Fungi incertae sedis</taxon>
        <taxon>Microsporidia</taxon>
        <taxon>Unikaryonidae</taxon>
        <taxon>Encephalitozoon</taxon>
    </lineage>
</organism>
<evidence type="ECO:0000256" key="1">
    <source>
        <dbReference type="SAM" id="MobiDB-lite"/>
    </source>
</evidence>
<evidence type="ECO:0000269" key="2">
    <source>
    </source>
</evidence>
<evidence type="ECO:0000305" key="3"/>
<comment type="developmental stage">
    <text evidence="2">Expressed in late sporogonial stages.</text>
</comment>
<comment type="similarity">
    <text evidence="3">Belongs to the LEA type 1 family.</text>
</comment>
<feature type="chain" id="PRO_0000383335" description="Uncharacterized protein ECU03_1610">
    <location>
        <begin position="1"/>
        <end position="166"/>
    </location>
</feature>
<feature type="repeat" description="1">
    <location>
        <begin position="31"/>
        <end position="41"/>
    </location>
</feature>
<feature type="repeat" description="2">
    <location>
        <begin position="42"/>
        <end position="52"/>
    </location>
</feature>
<feature type="repeat" description="3">
    <location>
        <begin position="53"/>
        <end position="63"/>
    </location>
</feature>
<feature type="repeat" description="4">
    <location>
        <begin position="64"/>
        <end position="74"/>
    </location>
</feature>
<feature type="repeat" description="5">
    <location>
        <begin position="75"/>
        <end position="85"/>
    </location>
</feature>
<feature type="repeat" description="6">
    <location>
        <begin position="86"/>
        <end position="96"/>
    </location>
</feature>
<feature type="repeat" description="7">
    <location>
        <begin position="97"/>
        <end position="107"/>
    </location>
</feature>
<feature type="repeat" description="8">
    <location>
        <begin position="108"/>
        <end position="118"/>
    </location>
</feature>
<feature type="region of interest" description="Disordered" evidence="1">
    <location>
        <begin position="1"/>
        <end position="144"/>
    </location>
</feature>
<feature type="region of interest" description="8 X 11 AA approximate tandem repeats of D-K-T-K-E-T-A-G/E-S-A-K">
    <location>
        <begin position="31"/>
        <end position="118"/>
    </location>
</feature>
<feature type="compositionally biased region" description="Basic and acidic residues" evidence="1">
    <location>
        <begin position="1"/>
        <end position="13"/>
    </location>
</feature>
<feature type="compositionally biased region" description="Basic and acidic residues" evidence="1">
    <location>
        <begin position="21"/>
        <end position="112"/>
    </location>
</feature>
<feature type="compositionally biased region" description="Basic and acidic residues" evidence="1">
    <location>
        <begin position="119"/>
        <end position="137"/>
    </location>
</feature>
<keyword id="KW-1185">Reference proteome</keyword>
<keyword id="KW-0677">Repeat</keyword>
<protein>
    <recommendedName>
        <fullName>Uncharacterized protein ECU03_1610</fullName>
    </recommendedName>
</protein>
<proteinExistence type="evidence at protein level"/>